<keyword id="KW-0378">Hydrolase</keyword>
<proteinExistence type="inferred from homology"/>
<evidence type="ECO:0000255" key="1">
    <source>
        <dbReference type="HAMAP-Rule" id="MF_00199"/>
    </source>
</evidence>
<gene>
    <name evidence="1" type="primary">apaH</name>
    <name type="ordered locus">ECDH10B_0050</name>
</gene>
<protein>
    <recommendedName>
        <fullName evidence="1">Bis(5'-nucleosyl)-tetraphosphatase, symmetrical</fullName>
        <ecNumber evidence="1">3.6.1.41</ecNumber>
    </recommendedName>
    <alternativeName>
        <fullName evidence="1">Ap4A hydrolase</fullName>
    </alternativeName>
    <alternativeName>
        <fullName evidence="1">Diadenosine 5',5'''-P1,P4-tetraphosphate pyrophosphohydrolase</fullName>
    </alternativeName>
    <alternativeName>
        <fullName evidence="1">Diadenosine tetraphosphatase</fullName>
    </alternativeName>
</protein>
<reference key="1">
    <citation type="journal article" date="2008" name="J. Bacteriol.">
        <title>The complete genome sequence of Escherichia coli DH10B: insights into the biology of a laboratory workhorse.</title>
        <authorList>
            <person name="Durfee T."/>
            <person name="Nelson R."/>
            <person name="Baldwin S."/>
            <person name="Plunkett G. III"/>
            <person name="Burland V."/>
            <person name="Mau B."/>
            <person name="Petrosino J.F."/>
            <person name="Qin X."/>
            <person name="Muzny D.M."/>
            <person name="Ayele M."/>
            <person name="Gibbs R.A."/>
            <person name="Csorgo B."/>
            <person name="Posfai G."/>
            <person name="Weinstock G.M."/>
            <person name="Blattner F.R."/>
        </authorList>
    </citation>
    <scope>NUCLEOTIDE SEQUENCE [LARGE SCALE GENOMIC DNA]</scope>
    <source>
        <strain>K12 / DH10B</strain>
    </source>
</reference>
<feature type="chain" id="PRO_1000099323" description="Bis(5'-nucleosyl)-tetraphosphatase, symmetrical">
    <location>
        <begin position="1"/>
        <end position="280"/>
    </location>
</feature>
<comment type="function">
    <text evidence="1">Hydrolyzes diadenosine 5',5'''-P1,P4-tetraphosphate to yield ADP.</text>
</comment>
<comment type="catalytic activity">
    <reaction evidence="1">
        <text>P(1),P(4)-bis(5'-adenosyl) tetraphosphate + H2O = 2 ADP + 2 H(+)</text>
        <dbReference type="Rhea" id="RHEA:24252"/>
        <dbReference type="ChEBI" id="CHEBI:15377"/>
        <dbReference type="ChEBI" id="CHEBI:15378"/>
        <dbReference type="ChEBI" id="CHEBI:58141"/>
        <dbReference type="ChEBI" id="CHEBI:456216"/>
        <dbReference type="EC" id="3.6.1.41"/>
    </reaction>
</comment>
<comment type="similarity">
    <text evidence="1">Belongs to the Ap4A hydrolase family.</text>
</comment>
<accession>B1XC50</accession>
<dbReference type="EC" id="3.6.1.41" evidence="1"/>
<dbReference type="EMBL" id="CP000948">
    <property type="protein sequence ID" value="ACB01254.1"/>
    <property type="molecule type" value="Genomic_DNA"/>
</dbReference>
<dbReference type="RefSeq" id="WP_000257192.1">
    <property type="nucleotide sequence ID" value="NC_010473.1"/>
</dbReference>
<dbReference type="SMR" id="B1XC50"/>
<dbReference type="GeneID" id="93777386"/>
<dbReference type="KEGG" id="ecd:ECDH10B_0050"/>
<dbReference type="HOGENOM" id="CLU_056184_2_0_6"/>
<dbReference type="GO" id="GO:0008803">
    <property type="term" value="F:bis(5'-nucleosyl)-tetraphosphatase (symmetrical) activity"/>
    <property type="evidence" value="ECO:0007669"/>
    <property type="project" value="UniProtKB-UniRule"/>
</dbReference>
<dbReference type="CDD" id="cd07422">
    <property type="entry name" value="MPP_ApaH"/>
    <property type="match status" value="1"/>
</dbReference>
<dbReference type="FunFam" id="3.60.21.10:FF:000013">
    <property type="entry name" value="Bis(5'-nucleosyl)-tetraphosphatase, symmetrical"/>
    <property type="match status" value="1"/>
</dbReference>
<dbReference type="Gene3D" id="3.60.21.10">
    <property type="match status" value="1"/>
</dbReference>
<dbReference type="HAMAP" id="MF_00199">
    <property type="entry name" value="ApaH"/>
    <property type="match status" value="1"/>
</dbReference>
<dbReference type="InterPro" id="IPR004617">
    <property type="entry name" value="ApaH"/>
</dbReference>
<dbReference type="InterPro" id="IPR004843">
    <property type="entry name" value="Calcineurin-like_PHP_ApaH"/>
</dbReference>
<dbReference type="InterPro" id="IPR029052">
    <property type="entry name" value="Metallo-depent_PP-like"/>
</dbReference>
<dbReference type="NCBIfam" id="TIGR00668">
    <property type="entry name" value="apaH"/>
    <property type="match status" value="1"/>
</dbReference>
<dbReference type="NCBIfam" id="NF001204">
    <property type="entry name" value="PRK00166.1"/>
    <property type="match status" value="1"/>
</dbReference>
<dbReference type="PANTHER" id="PTHR40942">
    <property type="match status" value="1"/>
</dbReference>
<dbReference type="PANTHER" id="PTHR40942:SF4">
    <property type="entry name" value="CYTOCHROME C5"/>
    <property type="match status" value="1"/>
</dbReference>
<dbReference type="Pfam" id="PF00149">
    <property type="entry name" value="Metallophos"/>
    <property type="match status" value="1"/>
</dbReference>
<dbReference type="PIRSF" id="PIRSF000903">
    <property type="entry name" value="B5n-ttraPtase_sm"/>
    <property type="match status" value="1"/>
</dbReference>
<dbReference type="SUPFAM" id="SSF56300">
    <property type="entry name" value="Metallo-dependent phosphatases"/>
    <property type="match status" value="1"/>
</dbReference>
<name>APAH_ECODH</name>
<organism>
    <name type="scientific">Escherichia coli (strain K12 / DH10B)</name>
    <dbReference type="NCBI Taxonomy" id="316385"/>
    <lineage>
        <taxon>Bacteria</taxon>
        <taxon>Pseudomonadati</taxon>
        <taxon>Pseudomonadota</taxon>
        <taxon>Gammaproteobacteria</taxon>
        <taxon>Enterobacterales</taxon>
        <taxon>Enterobacteriaceae</taxon>
        <taxon>Escherichia</taxon>
    </lineage>
</organism>
<sequence>MATYLIGDVHGCYDELIALLHKVEFTPGKDTLWLTGDLVARGPGSLDVLRYVKSLGDSVRLVLGNHDLHLLAVFAGISRNKPKDRLTPLLEAPDADELLNWLRRQPLLQIDEEKKLVMAHAGITPQWDLQTAKECARDVEAVLSSDSYPFFLDAMYGDMPNNWSPELRGLGRLRFITNAFTRMRFCFPNGQLDMYSKESPEEAPAPLKPWFAIPGPVAEEYSIAFGHWASLEGKGTPEGIYALDTGCCWGGTLTCLRWEDKQYFVQPSNRHKDLGEAAAS</sequence>